<proteinExistence type="inferred from homology"/>
<reference key="1">
    <citation type="journal article" date="2016" name="Genome Announc.">
        <title>Complete genome sequence of Alkaliphilus metalliredigens strain QYMF, an alkaliphilic and metal-reducing bacterium isolated from borax-contaminated leachate ponds.</title>
        <authorList>
            <person name="Hwang C."/>
            <person name="Copeland A."/>
            <person name="Lucas S."/>
            <person name="Lapidus A."/>
            <person name="Barry K."/>
            <person name="Detter J.C."/>
            <person name="Glavina Del Rio T."/>
            <person name="Hammon N."/>
            <person name="Israni S."/>
            <person name="Dalin E."/>
            <person name="Tice H."/>
            <person name="Pitluck S."/>
            <person name="Chertkov O."/>
            <person name="Brettin T."/>
            <person name="Bruce D."/>
            <person name="Han C."/>
            <person name="Schmutz J."/>
            <person name="Larimer F."/>
            <person name="Land M.L."/>
            <person name="Hauser L."/>
            <person name="Kyrpides N."/>
            <person name="Mikhailova N."/>
            <person name="Ye Q."/>
            <person name="Zhou J."/>
            <person name="Richardson P."/>
            <person name="Fields M.W."/>
        </authorList>
    </citation>
    <scope>NUCLEOTIDE SEQUENCE [LARGE SCALE GENOMIC DNA]</scope>
    <source>
        <strain>QYMF</strain>
    </source>
</reference>
<feature type="chain" id="PRO_0000336021" description="Glutaminase">
    <location>
        <begin position="1"/>
        <end position="305"/>
    </location>
</feature>
<feature type="binding site" evidence="1">
    <location>
        <position position="61"/>
    </location>
    <ligand>
        <name>substrate</name>
    </ligand>
</feature>
<feature type="binding site" evidence="1">
    <location>
        <position position="113"/>
    </location>
    <ligand>
        <name>substrate</name>
    </ligand>
</feature>
<feature type="binding site" evidence="1">
    <location>
        <position position="158"/>
    </location>
    <ligand>
        <name>substrate</name>
    </ligand>
</feature>
<feature type="binding site" evidence="1">
    <location>
        <position position="165"/>
    </location>
    <ligand>
        <name>substrate</name>
    </ligand>
</feature>
<feature type="binding site" evidence="1">
    <location>
        <position position="189"/>
    </location>
    <ligand>
        <name>substrate</name>
    </ligand>
</feature>
<feature type="binding site" evidence="1">
    <location>
        <position position="241"/>
    </location>
    <ligand>
        <name>substrate</name>
    </ligand>
</feature>
<feature type="binding site" evidence="1">
    <location>
        <position position="259"/>
    </location>
    <ligand>
        <name>substrate</name>
    </ligand>
</feature>
<comment type="catalytic activity">
    <reaction evidence="1">
        <text>L-glutamine + H2O = L-glutamate + NH4(+)</text>
        <dbReference type="Rhea" id="RHEA:15889"/>
        <dbReference type="ChEBI" id="CHEBI:15377"/>
        <dbReference type="ChEBI" id="CHEBI:28938"/>
        <dbReference type="ChEBI" id="CHEBI:29985"/>
        <dbReference type="ChEBI" id="CHEBI:58359"/>
        <dbReference type="EC" id="3.5.1.2"/>
    </reaction>
</comment>
<comment type="subunit">
    <text evidence="1">Homotetramer.</text>
</comment>
<comment type="similarity">
    <text evidence="1">Belongs to the glutaminase family.</text>
</comment>
<name>GLSA_ALKMQ</name>
<keyword id="KW-0378">Hydrolase</keyword>
<keyword id="KW-1185">Reference proteome</keyword>
<dbReference type="EC" id="3.5.1.2" evidence="1"/>
<dbReference type="EMBL" id="CP000724">
    <property type="protein sequence ID" value="ABR49764.1"/>
    <property type="molecule type" value="Genomic_DNA"/>
</dbReference>
<dbReference type="RefSeq" id="WP_012064724.1">
    <property type="nucleotide sequence ID" value="NC_009633.1"/>
</dbReference>
<dbReference type="SMR" id="A6TU96"/>
<dbReference type="STRING" id="293826.Amet_3642"/>
<dbReference type="KEGG" id="amt:Amet_3642"/>
<dbReference type="eggNOG" id="COG2066">
    <property type="taxonomic scope" value="Bacteria"/>
</dbReference>
<dbReference type="HOGENOM" id="CLU_027932_1_0_9"/>
<dbReference type="OrthoDB" id="9788822at2"/>
<dbReference type="Proteomes" id="UP000001572">
    <property type="component" value="Chromosome"/>
</dbReference>
<dbReference type="GO" id="GO:0004359">
    <property type="term" value="F:glutaminase activity"/>
    <property type="evidence" value="ECO:0007669"/>
    <property type="project" value="UniProtKB-UniRule"/>
</dbReference>
<dbReference type="GO" id="GO:0006537">
    <property type="term" value="P:glutamate biosynthetic process"/>
    <property type="evidence" value="ECO:0007669"/>
    <property type="project" value="TreeGrafter"/>
</dbReference>
<dbReference type="GO" id="GO:0006543">
    <property type="term" value="P:glutamine catabolic process"/>
    <property type="evidence" value="ECO:0007669"/>
    <property type="project" value="TreeGrafter"/>
</dbReference>
<dbReference type="FunFam" id="3.40.710.10:FF:000005">
    <property type="entry name" value="Glutaminase"/>
    <property type="match status" value="1"/>
</dbReference>
<dbReference type="Gene3D" id="3.40.710.10">
    <property type="entry name" value="DD-peptidase/beta-lactamase superfamily"/>
    <property type="match status" value="1"/>
</dbReference>
<dbReference type="HAMAP" id="MF_00313">
    <property type="entry name" value="Glutaminase"/>
    <property type="match status" value="1"/>
</dbReference>
<dbReference type="InterPro" id="IPR012338">
    <property type="entry name" value="Beta-lactam/transpept-like"/>
</dbReference>
<dbReference type="InterPro" id="IPR015868">
    <property type="entry name" value="Glutaminase"/>
</dbReference>
<dbReference type="NCBIfam" id="TIGR03814">
    <property type="entry name" value="Gln_ase"/>
    <property type="match status" value="1"/>
</dbReference>
<dbReference type="PANTHER" id="PTHR12544">
    <property type="entry name" value="GLUTAMINASE"/>
    <property type="match status" value="1"/>
</dbReference>
<dbReference type="PANTHER" id="PTHR12544:SF29">
    <property type="entry name" value="GLUTAMINASE"/>
    <property type="match status" value="1"/>
</dbReference>
<dbReference type="Pfam" id="PF04960">
    <property type="entry name" value="Glutaminase"/>
    <property type="match status" value="1"/>
</dbReference>
<dbReference type="SUPFAM" id="SSF56601">
    <property type="entry name" value="beta-lactamase/transpeptidase-like"/>
    <property type="match status" value="1"/>
</dbReference>
<protein>
    <recommendedName>
        <fullName evidence="1">Glutaminase</fullName>
        <ecNumber evidence="1">3.5.1.2</ecNumber>
    </recommendedName>
</protein>
<organism>
    <name type="scientific">Alkaliphilus metalliredigens (strain QYMF)</name>
    <dbReference type="NCBI Taxonomy" id="293826"/>
    <lineage>
        <taxon>Bacteria</taxon>
        <taxon>Bacillati</taxon>
        <taxon>Bacillota</taxon>
        <taxon>Clostridia</taxon>
        <taxon>Peptostreptococcales</taxon>
        <taxon>Natronincolaceae</taxon>
        <taxon>Alkaliphilus</taxon>
    </lineage>
</organism>
<accession>A6TU96</accession>
<gene>
    <name evidence="1" type="primary">glsA</name>
    <name type="ordered locus">Amet_3642</name>
</gene>
<evidence type="ECO:0000255" key="1">
    <source>
        <dbReference type="HAMAP-Rule" id="MF_00313"/>
    </source>
</evidence>
<sequence length="305" mass="33617">MNEQLQKILDTNRHHIQGGQLPTYIPELSKANKEALGIYVADLDGNEYGVGDYEYPFTIQSISKVVTLLLALSDRGEKYVFDKVGMEPTGDPFNSMMKLEVVRPSKPFNPMINAGAIAVTSMIKGDSQKERLERILGFFRQLTENPNLQVNQSVYRSEKITGDRNRSMAYFMKDVGIMQNDIESDLDLYFNQCSIEVTCKDIAKIGRFLANGGVLFETGQQLIDEKYIKMAEAFMVTCGMYNASGEFAIKVGIPAKSGVGGGIMASVPKKMGIGVVGPSLDEKGNSIAGVRVLQKMAEDYGLSIF</sequence>